<name>HD9_ENCCU</name>
<protein>
    <recommendedName>
        <fullName>Homeobox protein HD-9</fullName>
    </recommendedName>
    <alternativeName>
        <fullName>EcHD-9</fullName>
    </alternativeName>
</protein>
<reference key="1">
    <citation type="journal article" date="2001" name="Nature">
        <title>Genome sequence and gene compaction of the eukaryote parasite Encephalitozoon cuniculi.</title>
        <authorList>
            <person name="Katinka M.D."/>
            <person name="Duprat S."/>
            <person name="Cornillot E."/>
            <person name="Metenier G."/>
            <person name="Thomarat F."/>
            <person name="Prensier G."/>
            <person name="Barbe V."/>
            <person name="Peyretaillade E."/>
            <person name="Brottier P."/>
            <person name="Wincker P."/>
            <person name="Delbac F."/>
            <person name="El Alaoui H."/>
            <person name="Peyret P."/>
            <person name="Saurin W."/>
            <person name="Gouy M."/>
            <person name="Weissenbach J."/>
            <person name="Vivares C.P."/>
        </authorList>
    </citation>
    <scope>NUCLEOTIDE SEQUENCE [LARGE SCALE GENOMIC DNA]</scope>
    <source>
        <strain>GB-M1</strain>
    </source>
</reference>
<reference key="2">
    <citation type="journal article" date="2003" name="Dev. Genes Evol.">
        <title>The homeobox genes of Encephalitozoon cuniculi (Microsporidia) reveal a putative mating-type locus.</title>
        <authorList>
            <person name="Buerglin T.R."/>
        </authorList>
    </citation>
    <scope>IDENTIFICATION</scope>
    <scope>DISCUSSION OF SEQUENCE</scope>
</reference>
<sequence>MKIKHMPAKKSRLSKAQRDFLDTYFEVNPHPNTQERAYIASQSLVSEEKIRNWFQNRRTRERGDCKIASHRSAFSVNTFEENTSSVHPTSNDLYIRR</sequence>
<feature type="chain" id="PRO_0000048918" description="Homeobox protein HD-9">
    <location>
        <begin position="1"/>
        <end position="97"/>
    </location>
</feature>
<feature type="DNA-binding region" description="Homeobox" evidence="1">
    <location>
        <begin position="6"/>
        <end position="65"/>
    </location>
</feature>
<evidence type="ECO:0000255" key="1">
    <source>
        <dbReference type="PROSITE-ProRule" id="PRU00108"/>
    </source>
</evidence>
<dbReference type="EMBL" id="AL590443">
    <property type="protein sequence ID" value="CCI73919.1"/>
    <property type="molecule type" value="Genomic_DNA"/>
</dbReference>
<dbReference type="EMBL" id="BK001338">
    <property type="protein sequence ID" value="DAA01301.1"/>
    <property type="molecule type" value="Genomic_DNA"/>
</dbReference>
<dbReference type="SMR" id="Q7SI91"/>
<dbReference type="VEuPathDB" id="MicrosporidiaDB:ECU03_1395"/>
<dbReference type="HOGENOM" id="CLU_2386744_0_0_1"/>
<dbReference type="InParanoid" id="Q7SI91"/>
<dbReference type="OrthoDB" id="6159439at2759"/>
<dbReference type="Proteomes" id="UP000000819">
    <property type="component" value="Chromosome III"/>
</dbReference>
<dbReference type="GO" id="GO:0005634">
    <property type="term" value="C:nucleus"/>
    <property type="evidence" value="ECO:0007669"/>
    <property type="project" value="UniProtKB-SubCell"/>
</dbReference>
<dbReference type="GO" id="GO:0000981">
    <property type="term" value="F:DNA-binding transcription factor activity, RNA polymerase II-specific"/>
    <property type="evidence" value="ECO:0007669"/>
    <property type="project" value="InterPro"/>
</dbReference>
<dbReference type="GO" id="GO:0000977">
    <property type="term" value="F:RNA polymerase II transcription regulatory region sequence-specific DNA binding"/>
    <property type="evidence" value="ECO:0007669"/>
    <property type="project" value="TreeGrafter"/>
</dbReference>
<dbReference type="CDD" id="cd00086">
    <property type="entry name" value="homeodomain"/>
    <property type="match status" value="1"/>
</dbReference>
<dbReference type="Gene3D" id="1.10.10.60">
    <property type="entry name" value="Homeodomain-like"/>
    <property type="match status" value="1"/>
</dbReference>
<dbReference type="InterPro" id="IPR001356">
    <property type="entry name" value="HD"/>
</dbReference>
<dbReference type="InterPro" id="IPR017970">
    <property type="entry name" value="Homeobox_CS"/>
</dbReference>
<dbReference type="InterPro" id="IPR051306">
    <property type="entry name" value="Homeobox_regulator"/>
</dbReference>
<dbReference type="InterPro" id="IPR009057">
    <property type="entry name" value="Homeodomain-like_sf"/>
</dbReference>
<dbReference type="PANTHER" id="PTHR46123">
    <property type="entry name" value="MIX-TYPE HOMEOBOX GENE 1-RELATED"/>
    <property type="match status" value="1"/>
</dbReference>
<dbReference type="PANTHER" id="PTHR46123:SF4">
    <property type="entry name" value="MIX-TYPE HOMEOBOX GENE 1-RELATED"/>
    <property type="match status" value="1"/>
</dbReference>
<dbReference type="Pfam" id="PF00046">
    <property type="entry name" value="Homeodomain"/>
    <property type="match status" value="1"/>
</dbReference>
<dbReference type="SMART" id="SM00389">
    <property type="entry name" value="HOX"/>
    <property type="match status" value="1"/>
</dbReference>
<dbReference type="SUPFAM" id="SSF46689">
    <property type="entry name" value="Homeodomain-like"/>
    <property type="match status" value="1"/>
</dbReference>
<dbReference type="PROSITE" id="PS00027">
    <property type="entry name" value="HOMEOBOX_1"/>
    <property type="match status" value="1"/>
</dbReference>
<dbReference type="PROSITE" id="PS50071">
    <property type="entry name" value="HOMEOBOX_2"/>
    <property type="match status" value="1"/>
</dbReference>
<keyword id="KW-0238">DNA-binding</keyword>
<keyword id="KW-0371">Homeobox</keyword>
<keyword id="KW-0539">Nucleus</keyword>
<keyword id="KW-1185">Reference proteome</keyword>
<organism>
    <name type="scientific">Encephalitozoon cuniculi (strain GB-M1)</name>
    <name type="common">Microsporidian parasite</name>
    <dbReference type="NCBI Taxonomy" id="284813"/>
    <lineage>
        <taxon>Eukaryota</taxon>
        <taxon>Fungi</taxon>
        <taxon>Fungi incertae sedis</taxon>
        <taxon>Microsporidia</taxon>
        <taxon>Unikaryonidae</taxon>
        <taxon>Encephalitozoon</taxon>
    </lineage>
</organism>
<accession>Q7SI91</accession>
<accession>I7JTZ4</accession>
<gene>
    <name type="primary">HD-9</name>
    <name type="ordered locus">ECU03_1395</name>
</gene>
<proteinExistence type="predicted"/>
<comment type="subcellular location">
    <subcellularLocation>
        <location>Nucleus</location>
    </subcellularLocation>
</comment>